<feature type="chain" id="PRO_0000144406" description="ATP synthase subunit alpha, mitochondrial">
    <location>
        <begin position="1"/>
        <end position="509"/>
    </location>
</feature>
<feature type="binding site" evidence="1">
    <location>
        <begin position="171"/>
        <end position="178"/>
    </location>
    <ligand>
        <name>ATP</name>
        <dbReference type="ChEBI" id="CHEBI:30616"/>
    </ligand>
</feature>
<feature type="site" description="Required for activity" evidence="1">
    <location>
        <position position="373"/>
    </location>
</feature>
<reference key="1">
    <citation type="journal article" date="1988" name="Nucleic Acids Res.">
        <title>Sequence of the gene encoding the mitochondrial F1-ATPase alpha subunit from Nicotiana plumbaginifolia.</title>
        <authorList>
            <person name="Chaumont F."/>
            <person name="Boutry M."/>
            <person name="Briquet M."/>
            <person name="Vassarotti A."/>
        </authorList>
    </citation>
    <scope>NUCLEOTIDE SEQUENCE [GENOMIC DNA]</scope>
</reference>
<gene>
    <name type="primary">ATPA</name>
</gene>
<sequence>MELSPRAAELTSLLESRISNFYTNFQVDEIGRVVSVGDGIARVYGLNEIQAGEMVEFASGVKGIALNLENENVGIVVFGSDTAIKEGDLVKRTGSIVDVPAGKAMLGRVVDGLGVPIDGRGALSDHERRRVEVKAPGIIERKSVHEPMQTGLKAVDSLVPIGRGQRELIIGDRQTGKTAIAIDTILNQKQLNSRATSESETLYCVYVAIGQKRSTVAQLVQILSEANALEYSILVAATASDPAPLQFLAPYSGCAMGEYFRDNGMHALIIYDDLSKQAVAYRQMSLLLRRPPGREAFPGDVFYLHSRLLERAAKRSDQTGAGSLTALPVIETQAGDVSAYIPTNVIPITDGQICLETELFYRGIRPAINVGLSVSRVGSAAQLKTMKQVCGSSKLELAQYREVAALAQFGSDLDAATQALLNRGARLTEVPKQPQYAPLPIEKQILVIYAAVNGFCDRMPLDRISQYERAIPNSVKPELLQSFLEKGGLTNERKMEPDTFLKESALAFI</sequence>
<comment type="function">
    <text evidence="1">Mitochondrial membrane ATP synthase (F(1)F(0) ATP synthase or Complex V) produces ATP from ADP in the presence of a proton gradient across the membrane which is generated by electron transport complexes of the respiratory chain. F-type ATPases consist of two structural domains, F(1) - containing the extramembraneous catalytic core, and F(0) - containing the membrane proton channel, linked together by a central stalk and a peripheral stalk. During catalysis, ATP synthesis in the catalytic domain of F(1) is coupled via a rotary mechanism of the central stalk subunits to proton translocation. Subunits alpha and beta form the catalytic core in F(1). Rotation of the central stalk against the surrounding alpha(3)beta(3) subunits leads to hydrolysis of ATP in three separate catalytic sites on the beta subunits. Subunit alpha does not bear the catalytic high-affinity ATP-binding sites (By similarity).</text>
</comment>
<comment type="subunit">
    <text>F-type ATPases have 2 components, CF(1) - the catalytic core - and CF(0) - the membrane proton channel. CF(1) has five subunits: alpha(3), beta(3), gamma(1), delta(1), epsilon(1). CF(0) has three main subunits: a, b and c.</text>
</comment>
<comment type="subcellular location">
    <subcellularLocation>
        <location>Mitochondrion</location>
    </subcellularLocation>
    <subcellularLocation>
        <location>Mitochondrion inner membrane</location>
    </subcellularLocation>
    <text>Peripheral membrane protein.</text>
</comment>
<comment type="similarity">
    <text evidence="2">Belongs to the ATPase alpha/beta chains family.</text>
</comment>
<evidence type="ECO:0000250" key="1"/>
<evidence type="ECO:0000305" key="2"/>
<proteinExistence type="inferred from homology"/>
<protein>
    <recommendedName>
        <fullName>ATP synthase subunit alpha, mitochondrial</fullName>
    </recommendedName>
</protein>
<accession>P05495</accession>
<organism>
    <name type="scientific">Nicotiana plumbaginifolia</name>
    <name type="common">Leadwort-leaved tobacco</name>
    <name type="synonym">Tex-Mex tobacco</name>
    <dbReference type="NCBI Taxonomy" id="4092"/>
    <lineage>
        <taxon>Eukaryota</taxon>
        <taxon>Viridiplantae</taxon>
        <taxon>Streptophyta</taxon>
        <taxon>Embryophyta</taxon>
        <taxon>Tracheophyta</taxon>
        <taxon>Spermatophyta</taxon>
        <taxon>Magnoliopsida</taxon>
        <taxon>eudicotyledons</taxon>
        <taxon>Gunneridae</taxon>
        <taxon>Pentapetalae</taxon>
        <taxon>asterids</taxon>
        <taxon>lamiids</taxon>
        <taxon>Solanales</taxon>
        <taxon>Solanaceae</taxon>
        <taxon>Nicotianoideae</taxon>
        <taxon>Nicotianeae</taxon>
        <taxon>Nicotiana</taxon>
    </lineage>
</organism>
<geneLocation type="mitochondrion"/>
<dbReference type="EMBL" id="X07745">
    <property type="protein sequence ID" value="CAA30568.1"/>
    <property type="molecule type" value="Genomic_DNA"/>
</dbReference>
<dbReference type="PIR" id="S00956">
    <property type="entry name" value="PWNTAC"/>
</dbReference>
<dbReference type="SMR" id="P05495"/>
<dbReference type="GO" id="GO:0005743">
    <property type="term" value="C:mitochondrial inner membrane"/>
    <property type="evidence" value="ECO:0007669"/>
    <property type="project" value="UniProtKB-SubCell"/>
</dbReference>
<dbReference type="GO" id="GO:0045259">
    <property type="term" value="C:proton-transporting ATP synthase complex"/>
    <property type="evidence" value="ECO:0007669"/>
    <property type="project" value="UniProtKB-KW"/>
</dbReference>
<dbReference type="GO" id="GO:0043531">
    <property type="term" value="F:ADP binding"/>
    <property type="evidence" value="ECO:0007669"/>
    <property type="project" value="TreeGrafter"/>
</dbReference>
<dbReference type="GO" id="GO:0005524">
    <property type="term" value="F:ATP binding"/>
    <property type="evidence" value="ECO:0007669"/>
    <property type="project" value="UniProtKB-KW"/>
</dbReference>
<dbReference type="GO" id="GO:0046933">
    <property type="term" value="F:proton-transporting ATP synthase activity, rotational mechanism"/>
    <property type="evidence" value="ECO:0007669"/>
    <property type="project" value="InterPro"/>
</dbReference>
<dbReference type="CDD" id="cd18113">
    <property type="entry name" value="ATP-synt_F1_alpha_C"/>
    <property type="match status" value="1"/>
</dbReference>
<dbReference type="CDD" id="cd18116">
    <property type="entry name" value="ATP-synt_F1_alpha_N"/>
    <property type="match status" value="1"/>
</dbReference>
<dbReference type="CDD" id="cd01132">
    <property type="entry name" value="F1-ATPase_alpha_CD"/>
    <property type="match status" value="1"/>
</dbReference>
<dbReference type="FunFam" id="1.20.150.20:FF:000001">
    <property type="entry name" value="ATP synthase subunit alpha"/>
    <property type="match status" value="1"/>
</dbReference>
<dbReference type="FunFam" id="2.40.30.20:FF:000001">
    <property type="entry name" value="ATP synthase subunit alpha"/>
    <property type="match status" value="1"/>
</dbReference>
<dbReference type="FunFam" id="3.40.50.300:FF:002432">
    <property type="entry name" value="ATP synthase subunit alpha, mitochondrial"/>
    <property type="match status" value="1"/>
</dbReference>
<dbReference type="Gene3D" id="2.40.30.20">
    <property type="match status" value="1"/>
</dbReference>
<dbReference type="Gene3D" id="1.20.150.20">
    <property type="entry name" value="ATP synthase alpha/beta chain, C-terminal domain"/>
    <property type="match status" value="1"/>
</dbReference>
<dbReference type="Gene3D" id="3.40.50.300">
    <property type="entry name" value="P-loop containing nucleotide triphosphate hydrolases"/>
    <property type="match status" value="1"/>
</dbReference>
<dbReference type="HAMAP" id="MF_01346">
    <property type="entry name" value="ATP_synth_alpha_bact"/>
    <property type="match status" value="1"/>
</dbReference>
<dbReference type="InterPro" id="IPR023366">
    <property type="entry name" value="ATP_synth_asu-like_sf"/>
</dbReference>
<dbReference type="InterPro" id="IPR000793">
    <property type="entry name" value="ATP_synth_asu_C"/>
</dbReference>
<dbReference type="InterPro" id="IPR038376">
    <property type="entry name" value="ATP_synth_asu_C_sf"/>
</dbReference>
<dbReference type="InterPro" id="IPR033732">
    <property type="entry name" value="ATP_synth_F1_a_nt-bd_dom"/>
</dbReference>
<dbReference type="InterPro" id="IPR005294">
    <property type="entry name" value="ATP_synth_F1_asu"/>
</dbReference>
<dbReference type="InterPro" id="IPR020003">
    <property type="entry name" value="ATPase_a/bsu_AS"/>
</dbReference>
<dbReference type="InterPro" id="IPR004100">
    <property type="entry name" value="ATPase_F1/V1/A1_a/bsu_N"/>
</dbReference>
<dbReference type="InterPro" id="IPR036121">
    <property type="entry name" value="ATPase_F1/V1/A1_a/bsu_N_sf"/>
</dbReference>
<dbReference type="InterPro" id="IPR000194">
    <property type="entry name" value="ATPase_F1/V1/A1_a/bsu_nucl-bd"/>
</dbReference>
<dbReference type="InterPro" id="IPR027417">
    <property type="entry name" value="P-loop_NTPase"/>
</dbReference>
<dbReference type="NCBIfam" id="TIGR00962">
    <property type="entry name" value="atpA"/>
    <property type="match status" value="1"/>
</dbReference>
<dbReference type="NCBIfam" id="NF009884">
    <property type="entry name" value="PRK13343.1"/>
    <property type="match status" value="1"/>
</dbReference>
<dbReference type="PANTHER" id="PTHR48082">
    <property type="entry name" value="ATP SYNTHASE SUBUNIT ALPHA, MITOCHONDRIAL"/>
    <property type="match status" value="1"/>
</dbReference>
<dbReference type="PANTHER" id="PTHR48082:SF2">
    <property type="entry name" value="ATP SYNTHASE SUBUNIT ALPHA, MITOCHONDRIAL"/>
    <property type="match status" value="1"/>
</dbReference>
<dbReference type="Pfam" id="PF00006">
    <property type="entry name" value="ATP-synt_ab"/>
    <property type="match status" value="1"/>
</dbReference>
<dbReference type="Pfam" id="PF00306">
    <property type="entry name" value="ATP-synt_ab_C"/>
    <property type="match status" value="1"/>
</dbReference>
<dbReference type="Pfam" id="PF02874">
    <property type="entry name" value="ATP-synt_ab_N"/>
    <property type="match status" value="1"/>
</dbReference>
<dbReference type="PIRSF" id="PIRSF039088">
    <property type="entry name" value="F_ATPase_subunit_alpha"/>
    <property type="match status" value="1"/>
</dbReference>
<dbReference type="SUPFAM" id="SSF47917">
    <property type="entry name" value="C-terminal domain of alpha and beta subunits of F1 ATP synthase"/>
    <property type="match status" value="1"/>
</dbReference>
<dbReference type="SUPFAM" id="SSF50615">
    <property type="entry name" value="N-terminal domain of alpha and beta subunits of F1 ATP synthase"/>
    <property type="match status" value="1"/>
</dbReference>
<dbReference type="SUPFAM" id="SSF52540">
    <property type="entry name" value="P-loop containing nucleoside triphosphate hydrolases"/>
    <property type="match status" value="1"/>
</dbReference>
<dbReference type="PROSITE" id="PS00152">
    <property type="entry name" value="ATPASE_ALPHA_BETA"/>
    <property type="match status" value="1"/>
</dbReference>
<keyword id="KW-0066">ATP synthesis</keyword>
<keyword id="KW-0067">ATP-binding</keyword>
<keyword id="KW-0139">CF(1)</keyword>
<keyword id="KW-0375">Hydrogen ion transport</keyword>
<keyword id="KW-0406">Ion transport</keyword>
<keyword id="KW-0472">Membrane</keyword>
<keyword id="KW-0496">Mitochondrion</keyword>
<keyword id="KW-0999">Mitochondrion inner membrane</keyword>
<keyword id="KW-0547">Nucleotide-binding</keyword>
<keyword id="KW-0813">Transport</keyword>
<name>ATPAM_NICPL</name>